<sequence length="121" mass="14288">MRKSYRIKSEQDFQTVFENGESVANRAFVIYVLPRKQNKHFRVGISVGKKVGHTAVVRNRLKRYIRAVLTENRDRIAPDLDFLVIARPYAHDFDWEKTRENLLHALNLAHVIEEMPNKEEK</sequence>
<evidence type="ECO:0000255" key="1">
    <source>
        <dbReference type="HAMAP-Rule" id="MF_00227"/>
    </source>
</evidence>
<accession>Q1G7Z2</accession>
<gene>
    <name evidence="1" type="primary">rnpA</name>
    <name type="ordered locus">Ldb2217</name>
</gene>
<feature type="chain" id="PRO_1000021416" description="Ribonuclease P protein component">
    <location>
        <begin position="1"/>
        <end position="121"/>
    </location>
</feature>
<reference key="1">
    <citation type="journal article" date="2006" name="Proc. Natl. Acad. Sci. U.S.A.">
        <title>The complete genome sequence of Lactobacillus bulgaricus reveals extensive and ongoing reductive evolution.</title>
        <authorList>
            <person name="van de Guchte M."/>
            <person name="Penaud S."/>
            <person name="Grimaldi C."/>
            <person name="Barbe V."/>
            <person name="Bryson K."/>
            <person name="Nicolas P."/>
            <person name="Robert C."/>
            <person name="Oztas S."/>
            <person name="Mangenot S."/>
            <person name="Couloux A."/>
            <person name="Loux V."/>
            <person name="Dervyn R."/>
            <person name="Bossy R."/>
            <person name="Bolotin A."/>
            <person name="Batto J.-M."/>
            <person name="Walunas T."/>
            <person name="Gibrat J.-F."/>
            <person name="Bessieres P."/>
            <person name="Weissenbach J."/>
            <person name="Ehrlich S.D."/>
            <person name="Maguin E."/>
        </authorList>
    </citation>
    <scope>NUCLEOTIDE SEQUENCE [LARGE SCALE GENOMIC DNA]</scope>
    <source>
        <strain>ATCC 11842 / DSM 20081 / BCRC 10696 / JCM 1002 / NBRC 13953 / NCIMB 11778 / NCTC 12712 / WDCM 00102 / Lb 14</strain>
    </source>
</reference>
<organism>
    <name type="scientific">Lactobacillus delbrueckii subsp. bulgaricus (strain ATCC 11842 / DSM 20081 / BCRC 10696 / JCM 1002 / NBRC 13953 / NCIMB 11778 / NCTC 12712 / WDCM 00102 / Lb 14)</name>
    <dbReference type="NCBI Taxonomy" id="390333"/>
    <lineage>
        <taxon>Bacteria</taxon>
        <taxon>Bacillati</taxon>
        <taxon>Bacillota</taxon>
        <taxon>Bacilli</taxon>
        <taxon>Lactobacillales</taxon>
        <taxon>Lactobacillaceae</taxon>
        <taxon>Lactobacillus</taxon>
    </lineage>
</organism>
<protein>
    <recommendedName>
        <fullName evidence="1">Ribonuclease P protein component</fullName>
        <shortName evidence="1">RNase P protein</shortName>
        <shortName evidence="1">RNaseP protein</shortName>
        <ecNumber evidence="1">3.1.26.5</ecNumber>
    </recommendedName>
    <alternativeName>
        <fullName evidence="1">Protein C5</fullName>
    </alternativeName>
</protein>
<dbReference type="EC" id="3.1.26.5" evidence="1"/>
<dbReference type="EMBL" id="CR954253">
    <property type="protein sequence ID" value="CAI98941.1"/>
    <property type="molecule type" value="Genomic_DNA"/>
</dbReference>
<dbReference type="RefSeq" id="WP_003622144.1">
    <property type="nucleotide sequence ID" value="NZ_JQAV01000011.1"/>
</dbReference>
<dbReference type="SMR" id="Q1G7Z2"/>
<dbReference type="STRING" id="390333.Ldb2217"/>
<dbReference type="KEGG" id="ldb:Ldb2217"/>
<dbReference type="PATRIC" id="fig|390333.13.peg.527"/>
<dbReference type="eggNOG" id="COG0594">
    <property type="taxonomic scope" value="Bacteria"/>
</dbReference>
<dbReference type="HOGENOM" id="CLU_117179_9_1_9"/>
<dbReference type="BioCyc" id="LDEL390333:LDB_RS09690-MONOMER"/>
<dbReference type="Proteomes" id="UP000001259">
    <property type="component" value="Chromosome"/>
</dbReference>
<dbReference type="GO" id="GO:0030677">
    <property type="term" value="C:ribonuclease P complex"/>
    <property type="evidence" value="ECO:0007669"/>
    <property type="project" value="TreeGrafter"/>
</dbReference>
<dbReference type="GO" id="GO:0042781">
    <property type="term" value="F:3'-tRNA processing endoribonuclease activity"/>
    <property type="evidence" value="ECO:0007669"/>
    <property type="project" value="TreeGrafter"/>
</dbReference>
<dbReference type="GO" id="GO:0004526">
    <property type="term" value="F:ribonuclease P activity"/>
    <property type="evidence" value="ECO:0007669"/>
    <property type="project" value="UniProtKB-UniRule"/>
</dbReference>
<dbReference type="GO" id="GO:0000049">
    <property type="term" value="F:tRNA binding"/>
    <property type="evidence" value="ECO:0007669"/>
    <property type="project" value="UniProtKB-UniRule"/>
</dbReference>
<dbReference type="GO" id="GO:0001682">
    <property type="term" value="P:tRNA 5'-leader removal"/>
    <property type="evidence" value="ECO:0007669"/>
    <property type="project" value="UniProtKB-UniRule"/>
</dbReference>
<dbReference type="FunFam" id="3.30.230.10:FF:000021">
    <property type="entry name" value="Ribonuclease P protein component"/>
    <property type="match status" value="1"/>
</dbReference>
<dbReference type="Gene3D" id="3.30.230.10">
    <property type="match status" value="1"/>
</dbReference>
<dbReference type="HAMAP" id="MF_00227">
    <property type="entry name" value="RNase_P"/>
    <property type="match status" value="1"/>
</dbReference>
<dbReference type="InterPro" id="IPR020568">
    <property type="entry name" value="Ribosomal_Su5_D2-typ_SF"/>
</dbReference>
<dbReference type="InterPro" id="IPR014721">
    <property type="entry name" value="Ribsml_uS5_D2-typ_fold_subgr"/>
</dbReference>
<dbReference type="InterPro" id="IPR000100">
    <property type="entry name" value="RNase_P"/>
</dbReference>
<dbReference type="NCBIfam" id="TIGR00188">
    <property type="entry name" value="rnpA"/>
    <property type="match status" value="1"/>
</dbReference>
<dbReference type="PANTHER" id="PTHR33992">
    <property type="entry name" value="RIBONUCLEASE P PROTEIN COMPONENT"/>
    <property type="match status" value="1"/>
</dbReference>
<dbReference type="PANTHER" id="PTHR33992:SF1">
    <property type="entry name" value="RIBONUCLEASE P PROTEIN COMPONENT"/>
    <property type="match status" value="1"/>
</dbReference>
<dbReference type="Pfam" id="PF00825">
    <property type="entry name" value="Ribonuclease_P"/>
    <property type="match status" value="1"/>
</dbReference>
<dbReference type="SUPFAM" id="SSF54211">
    <property type="entry name" value="Ribosomal protein S5 domain 2-like"/>
    <property type="match status" value="1"/>
</dbReference>
<comment type="function">
    <text evidence="1">RNaseP catalyzes the removal of the 5'-leader sequence from pre-tRNA to produce the mature 5'-terminus. It can also cleave other RNA substrates such as 4.5S RNA. The protein component plays an auxiliary but essential role in vivo by binding to the 5'-leader sequence and broadening the substrate specificity of the ribozyme.</text>
</comment>
<comment type="catalytic activity">
    <reaction evidence="1">
        <text>Endonucleolytic cleavage of RNA, removing 5'-extranucleotides from tRNA precursor.</text>
        <dbReference type="EC" id="3.1.26.5"/>
    </reaction>
</comment>
<comment type="subunit">
    <text evidence="1">Consists of a catalytic RNA component (M1 or rnpB) and a protein subunit.</text>
</comment>
<comment type="similarity">
    <text evidence="1">Belongs to the RnpA family.</text>
</comment>
<keyword id="KW-0255">Endonuclease</keyword>
<keyword id="KW-0378">Hydrolase</keyword>
<keyword id="KW-0540">Nuclease</keyword>
<keyword id="KW-1185">Reference proteome</keyword>
<keyword id="KW-0694">RNA-binding</keyword>
<keyword id="KW-0819">tRNA processing</keyword>
<name>RNPA_LACDA</name>
<proteinExistence type="inferred from homology"/>